<name>MUTS2_CLOPE</name>
<protein>
    <recommendedName>
        <fullName evidence="1">Endonuclease MutS2</fullName>
        <ecNumber evidence="1">3.1.-.-</ecNumber>
    </recommendedName>
    <alternativeName>
        <fullName evidence="1">Ribosome-associated protein quality control-upstream factor</fullName>
        <shortName evidence="1">RQC-upstream factor</shortName>
        <shortName evidence="1">RqcU</shortName>
        <ecNumber evidence="1">3.6.4.-</ecNumber>
    </alternativeName>
</protein>
<evidence type="ECO:0000255" key="1">
    <source>
        <dbReference type="HAMAP-Rule" id="MF_00092"/>
    </source>
</evidence>
<gene>
    <name evidence="1" type="primary">mutS2</name>
    <name evidence="1" type="synonym">rqcU</name>
    <name type="ordered locus">CPE1881</name>
</gene>
<comment type="function">
    <text evidence="1">Endonuclease that is involved in the suppression of homologous recombination and thus may have a key role in the control of bacterial genetic diversity.</text>
</comment>
<comment type="function">
    <text evidence="1">Acts as a ribosome collision sensor, splitting the ribosome into its 2 subunits. Detects stalled/collided 70S ribosomes which it binds and splits by an ATP-hydrolysis driven conformational change. Acts upstream of the ribosome quality control system (RQC), a ribosome-associated complex that mediates the extraction of incompletely synthesized nascent chains from stalled ribosomes and their subsequent degradation. Probably generates substrates for RQC.</text>
</comment>
<comment type="subunit">
    <text evidence="1">Homodimer. Binds to stalled ribosomes, contacting rRNA.</text>
</comment>
<comment type="similarity">
    <text evidence="1">Belongs to the DNA mismatch repair MutS family. MutS2 subfamily.</text>
</comment>
<sequence length="786" mass="88111">MNDRVLRVLEFNKIKELVKGYAITKSAKEMVLDLKPYDSVYDVKEHLEETKEALDILMRKGNPPFEGLYDVKEAITRAEKGGVLSIEGLLRIGNMLAVTRKLSDFLARKEEEEEHRILEGMREGLIVLRGVESAISKAIVSEDEIADSASDKLYSIRRSLKEKNSSIRDKVNSIVRSNTQYLQDSLYTVRGDRYVIPVKAEYKSQVPGLVHDQSSTGATLFIEPTALVNLNNEIKELMLKERAEIERILAELSVLVYKNIDVIKVNFNIIVELDFIFAKAKYGSDLGGTLPIVNEEGVIDLMDARHPLIPKDKVVSSDIYLGREFSTLLITGPNTGGKTVTLKTTGLIELMGLSGLLIPASENSSISFFEEIFADIGDEQSIEQSLSTFSSHMTNIVRIMEKANNKSFVLFDELGAGTDPTEGAALAISILENLRARGCRIMSTTHYSELKGYALKTENVENASVEFNVETLRPTYRLLIGVPGKSNAFEISRRLGLKDNVIEEAKKVISTESLQFEDLIQSLQEKSIKAENDAREAAILRNDAEKYKNRYKEKFERIESVRDNVYADARREAKQILDSAKEEADAILKNMRDLERMGISSDARRKLEAERGKLRDKISDAEARLQKKKEEQKGEELKKIEVGMEALLPSINQKVIVLSKPDNKGEVQVQAGIMKINVKAKDLRVAKETKEEKKIKKREARLNLRQVDPSIDLRGMDSEEACYTADKYLDDAYVAGRGEVTLVHGKGTGVLRKAINDMLKKHPHVKSHRLGEYGEGGTGVTVVILK</sequence>
<proteinExistence type="inferred from homology"/>
<organism>
    <name type="scientific">Clostridium perfringens (strain 13 / Type A)</name>
    <dbReference type="NCBI Taxonomy" id="195102"/>
    <lineage>
        <taxon>Bacteria</taxon>
        <taxon>Bacillati</taxon>
        <taxon>Bacillota</taxon>
        <taxon>Clostridia</taxon>
        <taxon>Eubacteriales</taxon>
        <taxon>Clostridiaceae</taxon>
        <taxon>Clostridium</taxon>
    </lineage>
</organism>
<dbReference type="EC" id="3.1.-.-" evidence="1"/>
<dbReference type="EC" id="3.6.4.-" evidence="1"/>
<dbReference type="EMBL" id="BA000016">
    <property type="protein sequence ID" value="BAB81587.1"/>
    <property type="molecule type" value="Genomic_DNA"/>
</dbReference>
<dbReference type="RefSeq" id="WP_011010657.1">
    <property type="nucleotide sequence ID" value="NC_003366.1"/>
</dbReference>
<dbReference type="SMR" id="Q8XJ80"/>
<dbReference type="STRING" id="195102.gene:10491146"/>
<dbReference type="KEGG" id="cpe:CPE1881"/>
<dbReference type="HOGENOM" id="CLU_011252_2_1_9"/>
<dbReference type="Proteomes" id="UP000000818">
    <property type="component" value="Chromosome"/>
</dbReference>
<dbReference type="GO" id="GO:0005524">
    <property type="term" value="F:ATP binding"/>
    <property type="evidence" value="ECO:0007669"/>
    <property type="project" value="UniProtKB-UniRule"/>
</dbReference>
<dbReference type="GO" id="GO:0016887">
    <property type="term" value="F:ATP hydrolysis activity"/>
    <property type="evidence" value="ECO:0007669"/>
    <property type="project" value="InterPro"/>
</dbReference>
<dbReference type="GO" id="GO:0140664">
    <property type="term" value="F:ATP-dependent DNA damage sensor activity"/>
    <property type="evidence" value="ECO:0007669"/>
    <property type="project" value="InterPro"/>
</dbReference>
<dbReference type="GO" id="GO:0004519">
    <property type="term" value="F:endonuclease activity"/>
    <property type="evidence" value="ECO:0007669"/>
    <property type="project" value="UniProtKB-UniRule"/>
</dbReference>
<dbReference type="GO" id="GO:0030983">
    <property type="term" value="F:mismatched DNA binding"/>
    <property type="evidence" value="ECO:0007669"/>
    <property type="project" value="InterPro"/>
</dbReference>
<dbReference type="GO" id="GO:0043023">
    <property type="term" value="F:ribosomal large subunit binding"/>
    <property type="evidence" value="ECO:0007669"/>
    <property type="project" value="UniProtKB-UniRule"/>
</dbReference>
<dbReference type="GO" id="GO:0019843">
    <property type="term" value="F:rRNA binding"/>
    <property type="evidence" value="ECO:0007669"/>
    <property type="project" value="UniProtKB-UniRule"/>
</dbReference>
<dbReference type="GO" id="GO:0006298">
    <property type="term" value="P:mismatch repair"/>
    <property type="evidence" value="ECO:0007669"/>
    <property type="project" value="InterPro"/>
</dbReference>
<dbReference type="GO" id="GO:0045910">
    <property type="term" value="P:negative regulation of DNA recombination"/>
    <property type="evidence" value="ECO:0007669"/>
    <property type="project" value="InterPro"/>
</dbReference>
<dbReference type="GO" id="GO:0072344">
    <property type="term" value="P:rescue of stalled ribosome"/>
    <property type="evidence" value="ECO:0007669"/>
    <property type="project" value="UniProtKB-UniRule"/>
</dbReference>
<dbReference type="CDD" id="cd03280">
    <property type="entry name" value="ABC_MutS2"/>
    <property type="match status" value="1"/>
</dbReference>
<dbReference type="FunFam" id="3.30.1370.110:FF:000007">
    <property type="entry name" value="Endonuclease MutS2"/>
    <property type="match status" value="1"/>
</dbReference>
<dbReference type="FunFam" id="3.40.50.300:FF:000830">
    <property type="entry name" value="Endonuclease MutS2"/>
    <property type="match status" value="1"/>
</dbReference>
<dbReference type="Gene3D" id="3.30.1370.110">
    <property type="match status" value="1"/>
</dbReference>
<dbReference type="Gene3D" id="3.40.50.300">
    <property type="entry name" value="P-loop containing nucleotide triphosphate hydrolases"/>
    <property type="match status" value="1"/>
</dbReference>
<dbReference type="HAMAP" id="MF_00092">
    <property type="entry name" value="MutS2"/>
    <property type="match status" value="1"/>
</dbReference>
<dbReference type="InterPro" id="IPR000432">
    <property type="entry name" value="DNA_mismatch_repair_MutS_C"/>
</dbReference>
<dbReference type="InterPro" id="IPR007696">
    <property type="entry name" value="DNA_mismatch_repair_MutS_core"/>
</dbReference>
<dbReference type="InterPro" id="IPR036187">
    <property type="entry name" value="DNA_mismatch_repair_MutS_sf"/>
</dbReference>
<dbReference type="InterPro" id="IPR046893">
    <property type="entry name" value="MSSS"/>
</dbReference>
<dbReference type="InterPro" id="IPR045076">
    <property type="entry name" value="MutS"/>
</dbReference>
<dbReference type="InterPro" id="IPR005747">
    <property type="entry name" value="MutS2"/>
</dbReference>
<dbReference type="InterPro" id="IPR027417">
    <property type="entry name" value="P-loop_NTPase"/>
</dbReference>
<dbReference type="InterPro" id="IPR002625">
    <property type="entry name" value="Smr_dom"/>
</dbReference>
<dbReference type="InterPro" id="IPR036063">
    <property type="entry name" value="Smr_dom_sf"/>
</dbReference>
<dbReference type="NCBIfam" id="TIGR01069">
    <property type="entry name" value="mutS2"/>
    <property type="match status" value="1"/>
</dbReference>
<dbReference type="PANTHER" id="PTHR48466:SF2">
    <property type="entry name" value="OS10G0509000 PROTEIN"/>
    <property type="match status" value="1"/>
</dbReference>
<dbReference type="PANTHER" id="PTHR48466">
    <property type="entry name" value="OS10G0509000 PROTEIN-RELATED"/>
    <property type="match status" value="1"/>
</dbReference>
<dbReference type="Pfam" id="PF20297">
    <property type="entry name" value="MSSS"/>
    <property type="match status" value="1"/>
</dbReference>
<dbReference type="Pfam" id="PF00488">
    <property type="entry name" value="MutS_V"/>
    <property type="match status" value="1"/>
</dbReference>
<dbReference type="Pfam" id="PF01713">
    <property type="entry name" value="Smr"/>
    <property type="match status" value="1"/>
</dbReference>
<dbReference type="PIRSF" id="PIRSF005814">
    <property type="entry name" value="MutS_YshD"/>
    <property type="match status" value="1"/>
</dbReference>
<dbReference type="SMART" id="SM00534">
    <property type="entry name" value="MUTSac"/>
    <property type="match status" value="1"/>
</dbReference>
<dbReference type="SMART" id="SM00533">
    <property type="entry name" value="MUTSd"/>
    <property type="match status" value="1"/>
</dbReference>
<dbReference type="SMART" id="SM00463">
    <property type="entry name" value="SMR"/>
    <property type="match status" value="1"/>
</dbReference>
<dbReference type="SUPFAM" id="SSF48334">
    <property type="entry name" value="DNA repair protein MutS, domain III"/>
    <property type="match status" value="1"/>
</dbReference>
<dbReference type="SUPFAM" id="SSF52540">
    <property type="entry name" value="P-loop containing nucleoside triphosphate hydrolases"/>
    <property type="match status" value="1"/>
</dbReference>
<dbReference type="SUPFAM" id="SSF160443">
    <property type="entry name" value="SMR domain-like"/>
    <property type="match status" value="1"/>
</dbReference>
<dbReference type="PROSITE" id="PS00486">
    <property type="entry name" value="DNA_MISMATCH_REPAIR_2"/>
    <property type="match status" value="1"/>
</dbReference>
<dbReference type="PROSITE" id="PS50828">
    <property type="entry name" value="SMR"/>
    <property type="match status" value="1"/>
</dbReference>
<feature type="chain" id="PRO_0000115220" description="Endonuclease MutS2">
    <location>
        <begin position="1"/>
        <end position="786"/>
    </location>
</feature>
<feature type="domain" description="Smr" evidence="1">
    <location>
        <begin position="711"/>
        <end position="786"/>
    </location>
</feature>
<feature type="binding site" evidence="1">
    <location>
        <begin position="332"/>
        <end position="339"/>
    </location>
    <ligand>
        <name>ATP</name>
        <dbReference type="ChEBI" id="CHEBI:30616"/>
    </ligand>
</feature>
<keyword id="KW-0067">ATP-binding</keyword>
<keyword id="KW-0238">DNA-binding</keyword>
<keyword id="KW-0255">Endonuclease</keyword>
<keyword id="KW-0378">Hydrolase</keyword>
<keyword id="KW-0540">Nuclease</keyword>
<keyword id="KW-0547">Nucleotide-binding</keyword>
<keyword id="KW-1185">Reference proteome</keyword>
<keyword id="KW-0694">RNA-binding</keyword>
<keyword id="KW-0699">rRNA-binding</keyword>
<accession>Q8XJ80</accession>
<reference key="1">
    <citation type="journal article" date="2002" name="Proc. Natl. Acad. Sci. U.S.A.">
        <title>Complete genome sequence of Clostridium perfringens, an anaerobic flesh-eater.</title>
        <authorList>
            <person name="Shimizu T."/>
            <person name="Ohtani K."/>
            <person name="Hirakawa H."/>
            <person name="Ohshima K."/>
            <person name="Yamashita A."/>
            <person name="Shiba T."/>
            <person name="Ogasawara N."/>
            <person name="Hattori M."/>
            <person name="Kuhara S."/>
            <person name="Hayashi H."/>
        </authorList>
    </citation>
    <scope>NUCLEOTIDE SEQUENCE [LARGE SCALE GENOMIC DNA]</scope>
    <source>
        <strain>13 / Type A</strain>
    </source>
</reference>